<dbReference type="EMBL" id="X86790">
    <property type="protein sequence ID" value="CAA60489.1"/>
    <property type="molecule type" value="Genomic_DNA"/>
</dbReference>
<dbReference type="EMBL" id="Z71691">
    <property type="protein sequence ID" value="CAA96360.1"/>
    <property type="molecule type" value="Genomic_DNA"/>
</dbReference>
<dbReference type="EMBL" id="BK006947">
    <property type="protein sequence ID" value="DAA10618.1"/>
    <property type="molecule type" value="Genomic_DNA"/>
</dbReference>
<dbReference type="PIR" id="S50956">
    <property type="entry name" value="S50956"/>
</dbReference>
<dbReference type="RefSeq" id="NP_014474.3">
    <property type="nucleotide sequence ID" value="NM_001183253.3"/>
</dbReference>
<dbReference type="BioGRID" id="31252">
    <property type="interactions" value="2"/>
</dbReference>
<dbReference type="BioGRID" id="35902">
    <property type="interactions" value="1"/>
</dbReference>
<dbReference type="FunCoup" id="P0CE90">
    <property type="interactions" value="59"/>
</dbReference>
<dbReference type="EnsemblFungi" id="YLL064C_mRNA">
    <property type="protein sequence ID" value="YLL064C"/>
    <property type="gene ID" value="YLL064C"/>
</dbReference>
<dbReference type="EnsemblFungi" id="YNR076W_mRNA">
    <property type="protein sequence ID" value="YNR076W"/>
    <property type="gene ID" value="YNR076W"/>
</dbReference>
<dbReference type="GeneID" id="855813"/>
<dbReference type="KEGG" id="sce:YLL064C"/>
<dbReference type="KEGG" id="sce:YNR076W"/>
<dbReference type="AGR" id="SGD:S000005359"/>
<dbReference type="SGD" id="S000005359">
    <property type="gene designation" value="PAU6"/>
</dbReference>
<dbReference type="VEuPathDB" id="FungiDB:YLL064C"/>
<dbReference type="VEuPathDB" id="FungiDB:YNR076W"/>
<dbReference type="HOGENOM" id="CLU_136376_0_0_1"/>
<dbReference type="InParanoid" id="P0CE90"/>
<dbReference type="OMA" id="DIRXHLA"/>
<dbReference type="OrthoDB" id="4059055at2759"/>
<dbReference type="BioCyc" id="YEAST:G3O-33380-MONOMER"/>
<dbReference type="PRO" id="PR:P0CE90"/>
<dbReference type="Proteomes" id="UP000002311">
    <property type="component" value="Chromosome XIV"/>
</dbReference>
<dbReference type="RNAct" id="P0CE90">
    <property type="molecule type" value="protein"/>
</dbReference>
<dbReference type="ExpressionAtlas" id="P0CE90">
    <property type="expression patterns" value="baseline"/>
</dbReference>
<dbReference type="GO" id="GO:0009277">
    <property type="term" value="C:fungal-type cell wall"/>
    <property type="evidence" value="ECO:0000318"/>
    <property type="project" value="GO_Central"/>
</dbReference>
<dbReference type="GO" id="GO:0000324">
    <property type="term" value="C:fungal-type vacuole"/>
    <property type="evidence" value="ECO:0007005"/>
    <property type="project" value="SGD"/>
</dbReference>
<dbReference type="GO" id="GO:0005199">
    <property type="term" value="F:structural constituent of cell wall"/>
    <property type="evidence" value="ECO:0000318"/>
    <property type="project" value="GO_Central"/>
</dbReference>
<dbReference type="GO" id="GO:0031505">
    <property type="term" value="P:fungal-type cell wall organization"/>
    <property type="evidence" value="ECO:0000318"/>
    <property type="project" value="GO_Central"/>
</dbReference>
<dbReference type="InterPro" id="IPR000992">
    <property type="entry name" value="SRP1_TIP1"/>
</dbReference>
<dbReference type="InterPro" id="IPR050788">
    <property type="entry name" value="Yeast_SRP1/TIP1_CWP"/>
</dbReference>
<dbReference type="PANTHER" id="PTHR31002:SF34">
    <property type="entry name" value="CELL WALL PROTEIN CWP1-RELATED"/>
    <property type="match status" value="1"/>
</dbReference>
<dbReference type="PANTHER" id="PTHR31002">
    <property type="entry name" value="SERIPAUPERIN"/>
    <property type="match status" value="1"/>
</dbReference>
<dbReference type="Pfam" id="PF00660">
    <property type="entry name" value="SRP1_TIP1"/>
    <property type="match status" value="1"/>
</dbReference>
<dbReference type="PROSITE" id="PS00724">
    <property type="entry name" value="SRP1_TIP1"/>
    <property type="match status" value="1"/>
</dbReference>
<evidence type="ECO:0000255" key="1"/>
<evidence type="ECO:0000305" key="2"/>
<comment type="similarity">
    <text evidence="2">Belongs to the SRP1/TIP1 family. Seripauperin subfamily.</text>
</comment>
<reference key="1">
    <citation type="journal article" date="1996" name="Yeast">
        <title>Sequencing of a 9.2 kb telomeric fragment from the right arm of Saccharomyces cerevisiae chromosome XIV.</title>
        <authorList>
            <person name="Levesque H."/>
            <person name="Lepingle A."/>
            <person name="Nicaud J.-M."/>
            <person name="Gaillardin C."/>
        </authorList>
    </citation>
    <scope>NUCLEOTIDE SEQUENCE [GENOMIC DNA]</scope>
    <source>
        <strain>ATCC 204508 / S288c</strain>
    </source>
</reference>
<reference key="2">
    <citation type="journal article" date="1997" name="Nature">
        <title>The nucleotide sequence of Saccharomyces cerevisiae chromosome XIV and its evolutionary implications.</title>
        <authorList>
            <person name="Philippsen P."/>
            <person name="Kleine K."/>
            <person name="Poehlmann R."/>
            <person name="Duesterhoeft A."/>
            <person name="Hamberg K."/>
            <person name="Hegemann J.H."/>
            <person name="Obermaier B."/>
            <person name="Urrestarazu L.A."/>
            <person name="Aert R."/>
            <person name="Albermann K."/>
            <person name="Altmann R."/>
            <person name="Andre B."/>
            <person name="Baladron V."/>
            <person name="Ballesta J.P.G."/>
            <person name="Becam A.-M."/>
            <person name="Beinhauer J.D."/>
            <person name="Boskovic J."/>
            <person name="Buitrago M.J."/>
            <person name="Bussereau F."/>
            <person name="Coster F."/>
            <person name="Crouzet M."/>
            <person name="D'Angelo M."/>
            <person name="Dal Pero F."/>
            <person name="De Antoni A."/>
            <person name="del Rey F."/>
            <person name="Doignon F."/>
            <person name="Domdey H."/>
            <person name="Dubois E."/>
            <person name="Fiedler T.A."/>
            <person name="Fleig U."/>
            <person name="Floeth M."/>
            <person name="Fritz C."/>
            <person name="Gaillardin C."/>
            <person name="Garcia-Cantalejo J.M."/>
            <person name="Glansdorff N."/>
            <person name="Goffeau A."/>
            <person name="Gueldener U."/>
            <person name="Herbert C.J."/>
            <person name="Heumann K."/>
            <person name="Heuss-Neitzel D."/>
            <person name="Hilbert H."/>
            <person name="Hinni K."/>
            <person name="Iraqui Houssaini I."/>
            <person name="Jacquet M."/>
            <person name="Jimenez A."/>
            <person name="Jonniaux J.-L."/>
            <person name="Karpfinger-Hartl L."/>
            <person name="Lanfranchi G."/>
            <person name="Lepingle A."/>
            <person name="Levesque H."/>
            <person name="Lyck R."/>
            <person name="Maftahi M."/>
            <person name="Mallet L."/>
            <person name="Maurer C.T.C."/>
            <person name="Messenguy F."/>
            <person name="Mewes H.-W."/>
            <person name="Moestl D."/>
            <person name="Nasr F."/>
            <person name="Nicaud J.-M."/>
            <person name="Niedenthal R.K."/>
            <person name="Pandolfo D."/>
            <person name="Pierard A."/>
            <person name="Piravandi E."/>
            <person name="Planta R.J."/>
            <person name="Pohl T.M."/>
            <person name="Purnelle B."/>
            <person name="Rebischung C."/>
            <person name="Remacha M.A."/>
            <person name="Revuelta J.L."/>
            <person name="Rinke M."/>
            <person name="Saiz J.E."/>
            <person name="Sartorello F."/>
            <person name="Scherens B."/>
            <person name="Sen-Gupta M."/>
            <person name="Soler-Mira A."/>
            <person name="Urbanus J.H.M."/>
            <person name="Valle G."/>
            <person name="Van Dyck L."/>
            <person name="Verhasselt P."/>
            <person name="Vierendeels F."/>
            <person name="Vissers S."/>
            <person name="Voet M."/>
            <person name="Volckaert G."/>
            <person name="Wach A."/>
            <person name="Wambutt R."/>
            <person name="Wedler H."/>
            <person name="Zollner A."/>
            <person name="Hani J."/>
        </authorList>
    </citation>
    <scope>NUCLEOTIDE SEQUENCE [LARGE SCALE GENOMIC DNA]</scope>
    <source>
        <strain>ATCC 204508 / S288c</strain>
    </source>
</reference>
<reference key="3">
    <citation type="journal article" date="2014" name="G3 (Bethesda)">
        <title>The reference genome sequence of Saccharomyces cerevisiae: Then and now.</title>
        <authorList>
            <person name="Engel S.R."/>
            <person name="Dietrich F.S."/>
            <person name="Fisk D.G."/>
            <person name="Binkley G."/>
            <person name="Balakrishnan R."/>
            <person name="Costanzo M.C."/>
            <person name="Dwight S.S."/>
            <person name="Hitz B.C."/>
            <person name="Karra K."/>
            <person name="Nash R.S."/>
            <person name="Weng S."/>
            <person name="Wong E.D."/>
            <person name="Lloyd P."/>
            <person name="Skrzypek M.S."/>
            <person name="Miyasato S.R."/>
            <person name="Simison M."/>
            <person name="Cherry J.M."/>
        </authorList>
    </citation>
    <scope>GENOME REANNOTATION</scope>
    <source>
        <strain>ATCC 204508 / S288c</strain>
    </source>
</reference>
<proteinExistence type="inferred from homology"/>
<protein>
    <recommendedName>
        <fullName>Seripauperin-6</fullName>
    </recommendedName>
</protein>
<accession>P0CE90</accession>
<accession>D6VXU5</accession>
<accession>P52921</accession>
<gene>
    <name type="primary">PAU6</name>
    <name type="ordered locus">YNR076W</name>
    <name type="ORF">N3825</name>
</gene>
<name>PAU6_YEAST</name>
<organism>
    <name type="scientific">Saccharomyces cerevisiae (strain ATCC 204508 / S288c)</name>
    <name type="common">Baker's yeast</name>
    <dbReference type="NCBI Taxonomy" id="559292"/>
    <lineage>
        <taxon>Eukaryota</taxon>
        <taxon>Fungi</taxon>
        <taxon>Dikarya</taxon>
        <taxon>Ascomycota</taxon>
        <taxon>Saccharomycotina</taxon>
        <taxon>Saccharomycetes</taxon>
        <taxon>Saccharomycetales</taxon>
        <taxon>Saccharomycetaceae</taxon>
        <taxon>Saccharomyces</taxon>
    </lineage>
</organism>
<feature type="signal peptide" evidence="1">
    <location>
        <begin position="1"/>
        <end position="20"/>
    </location>
</feature>
<feature type="chain" id="PRO_0000203783" description="Seripauperin-6">
    <location>
        <begin position="21"/>
        <end position="120"/>
    </location>
</feature>
<keyword id="KW-1185">Reference proteome</keyword>
<keyword id="KW-0732">Signal</keyword>
<sequence>MVKLTSIAAGVAAIAATASATTTLAQSDERVNLVELGVYVSDIRAHLAQYYMFQAAHPTETYPVEVAEAVFNYGDFTTMLTGIAPDQVTRMITGVPWYSTRLKPAISKALSKDGIYTIAN</sequence>